<proteinExistence type="inferred from homology"/>
<feature type="chain" id="PRO_1000120103" description="Large ribosomal subunit protein bL32">
    <location>
        <begin position="1"/>
        <end position="63"/>
    </location>
</feature>
<feature type="region of interest" description="Disordered" evidence="2">
    <location>
        <begin position="1"/>
        <end position="22"/>
    </location>
</feature>
<feature type="compositionally biased region" description="Basic residues" evidence="2">
    <location>
        <begin position="7"/>
        <end position="18"/>
    </location>
</feature>
<keyword id="KW-0687">Ribonucleoprotein</keyword>
<keyword id="KW-0689">Ribosomal protein</keyword>
<reference key="1">
    <citation type="submission" date="2008-05" db="EMBL/GenBank/DDBJ databases">
        <title>Complete sequence of Chlorobium limicola DSM 245.</title>
        <authorList>
            <consortium name="US DOE Joint Genome Institute"/>
            <person name="Lucas S."/>
            <person name="Copeland A."/>
            <person name="Lapidus A."/>
            <person name="Glavina del Rio T."/>
            <person name="Dalin E."/>
            <person name="Tice H."/>
            <person name="Bruce D."/>
            <person name="Goodwin L."/>
            <person name="Pitluck S."/>
            <person name="Schmutz J."/>
            <person name="Larimer F."/>
            <person name="Land M."/>
            <person name="Hauser L."/>
            <person name="Kyrpides N."/>
            <person name="Ovchinnikova G."/>
            <person name="Zhao F."/>
            <person name="Li T."/>
            <person name="Liu Z."/>
            <person name="Overmann J."/>
            <person name="Bryant D.A."/>
            <person name="Richardson P."/>
        </authorList>
    </citation>
    <scope>NUCLEOTIDE SEQUENCE [LARGE SCALE GENOMIC DNA]</scope>
    <source>
        <strain>DSM 245 / NBRC 103803 / 6330</strain>
    </source>
</reference>
<sequence>MANPKAKMSKSRRDKRRAQFNARTKAATTVVCPNCGEPTLPHRACRHCGHYRGRAVVTKSANS</sequence>
<gene>
    <name evidence="1" type="primary">rpmF</name>
    <name type="ordered locus">Clim_0171</name>
</gene>
<accession>B3EED6</accession>
<protein>
    <recommendedName>
        <fullName evidence="1">Large ribosomal subunit protein bL32</fullName>
    </recommendedName>
    <alternativeName>
        <fullName evidence="3">50S ribosomal protein L32</fullName>
    </alternativeName>
</protein>
<evidence type="ECO:0000255" key="1">
    <source>
        <dbReference type="HAMAP-Rule" id="MF_00340"/>
    </source>
</evidence>
<evidence type="ECO:0000256" key="2">
    <source>
        <dbReference type="SAM" id="MobiDB-lite"/>
    </source>
</evidence>
<evidence type="ECO:0000305" key="3"/>
<name>RL32_CHLL2</name>
<comment type="similarity">
    <text evidence="1">Belongs to the bacterial ribosomal protein bL32 family.</text>
</comment>
<dbReference type="EMBL" id="CP001097">
    <property type="protein sequence ID" value="ACD89270.1"/>
    <property type="molecule type" value="Genomic_DNA"/>
</dbReference>
<dbReference type="RefSeq" id="WP_012465151.1">
    <property type="nucleotide sequence ID" value="NC_010803.1"/>
</dbReference>
<dbReference type="SMR" id="B3EED6"/>
<dbReference type="STRING" id="290315.Clim_0171"/>
<dbReference type="KEGG" id="cli:Clim_0171"/>
<dbReference type="eggNOG" id="COG0333">
    <property type="taxonomic scope" value="Bacteria"/>
</dbReference>
<dbReference type="HOGENOM" id="CLU_129084_1_3_10"/>
<dbReference type="OrthoDB" id="9812874at2"/>
<dbReference type="Proteomes" id="UP000008841">
    <property type="component" value="Chromosome"/>
</dbReference>
<dbReference type="GO" id="GO:0015934">
    <property type="term" value="C:large ribosomal subunit"/>
    <property type="evidence" value="ECO:0007669"/>
    <property type="project" value="InterPro"/>
</dbReference>
<dbReference type="GO" id="GO:0003735">
    <property type="term" value="F:structural constituent of ribosome"/>
    <property type="evidence" value="ECO:0007669"/>
    <property type="project" value="InterPro"/>
</dbReference>
<dbReference type="GO" id="GO:0006412">
    <property type="term" value="P:translation"/>
    <property type="evidence" value="ECO:0007669"/>
    <property type="project" value="UniProtKB-UniRule"/>
</dbReference>
<dbReference type="HAMAP" id="MF_00340">
    <property type="entry name" value="Ribosomal_bL32"/>
    <property type="match status" value="1"/>
</dbReference>
<dbReference type="InterPro" id="IPR002677">
    <property type="entry name" value="Ribosomal_bL32"/>
</dbReference>
<dbReference type="InterPro" id="IPR044957">
    <property type="entry name" value="Ribosomal_bL32_bact"/>
</dbReference>
<dbReference type="InterPro" id="IPR011332">
    <property type="entry name" value="Ribosomal_zn-bd"/>
</dbReference>
<dbReference type="NCBIfam" id="TIGR01031">
    <property type="entry name" value="rpmF_bact"/>
    <property type="match status" value="1"/>
</dbReference>
<dbReference type="PANTHER" id="PTHR35534">
    <property type="entry name" value="50S RIBOSOMAL PROTEIN L32"/>
    <property type="match status" value="1"/>
</dbReference>
<dbReference type="PANTHER" id="PTHR35534:SF1">
    <property type="entry name" value="LARGE RIBOSOMAL SUBUNIT PROTEIN BL32"/>
    <property type="match status" value="1"/>
</dbReference>
<dbReference type="Pfam" id="PF01783">
    <property type="entry name" value="Ribosomal_L32p"/>
    <property type="match status" value="1"/>
</dbReference>
<dbReference type="SUPFAM" id="SSF57829">
    <property type="entry name" value="Zn-binding ribosomal proteins"/>
    <property type="match status" value="1"/>
</dbReference>
<organism>
    <name type="scientific">Chlorobium limicola (strain DSM 245 / NBRC 103803 / 6330)</name>
    <dbReference type="NCBI Taxonomy" id="290315"/>
    <lineage>
        <taxon>Bacteria</taxon>
        <taxon>Pseudomonadati</taxon>
        <taxon>Chlorobiota</taxon>
        <taxon>Chlorobiia</taxon>
        <taxon>Chlorobiales</taxon>
        <taxon>Chlorobiaceae</taxon>
        <taxon>Chlorobium/Pelodictyon group</taxon>
        <taxon>Chlorobium</taxon>
    </lineage>
</organism>